<comment type="developmental stage">
    <text evidence="4">Expression relative to adult is increased in the L3 stage and more so in dauers.</text>
</comment>
<comment type="similarity">
    <text evidence="5">Belongs to the globin family.</text>
</comment>
<proteinExistence type="evidence at transcript level"/>
<protein>
    <recommendedName>
        <fullName>Globin-like protein 9</fullName>
    </recommendedName>
</protein>
<gene>
    <name type="primary">glb-9</name>
    <name type="ORF">C28F5.2</name>
</gene>
<reference key="1">
    <citation type="journal article" date="2007" name="BMC Genomics">
        <title>Wide diversity in structure and expression profiles among members of the Caenorhabditis elegans globin protein family.</title>
        <authorList>
            <person name="Hoogewijs D."/>
            <person name="Geuens E."/>
            <person name="Dewilde S."/>
            <person name="Vierstraete A."/>
            <person name="Moens L."/>
            <person name="Vinogradov S."/>
            <person name="Vanfleteren J.R."/>
        </authorList>
    </citation>
    <scope>NUCLEOTIDE SEQUENCE [MRNA]</scope>
    <scope>DEVELOPMENTAL STAGE</scope>
</reference>
<reference key="2">
    <citation type="journal article" date="1998" name="Science">
        <title>Genome sequence of the nematode C. elegans: a platform for investigating biology.</title>
        <authorList>
            <consortium name="The C. elegans sequencing consortium"/>
        </authorList>
    </citation>
    <scope>NUCLEOTIDE SEQUENCE [LARGE SCALE GENOMIC DNA]</scope>
    <source>
        <strain>Bristol N2</strain>
    </source>
</reference>
<sequence>MDELSTSPYQFRRTQSCRVTNKGPNGLARRGTQRGCSRSKSTRRGNLGTIASLTFSQKQALNLSWRLLKPQASACFRKIFLELEIASPKVKQIFYKAALVDAFNKDDDNSATMEVHIKLTTKFFDELLVSLDDETEFVNKIRGIGSAHAILAKGSNFSSDIWERLGEIAMERVCSHEVVTKTREASRAWRTLIAILIDELRGGFEGELRQHRKSSSTDQIEMGKMEDEEELHAKLQQLRMDYNQTLPYT</sequence>
<accession>Q09240</accession>
<accession>A8R9T5</accession>
<evidence type="ECO:0000250" key="1"/>
<evidence type="ECO:0000255" key="2">
    <source>
        <dbReference type="PROSITE-ProRule" id="PRU00238"/>
    </source>
</evidence>
<evidence type="ECO:0000256" key="3">
    <source>
        <dbReference type="SAM" id="MobiDB-lite"/>
    </source>
</evidence>
<evidence type="ECO:0000269" key="4">
    <source>
    </source>
</evidence>
<evidence type="ECO:0000305" key="5"/>
<name>GLOB9_CAEEL</name>
<keyword id="KW-0349">Heme</keyword>
<keyword id="KW-0408">Iron</keyword>
<keyword id="KW-0479">Metal-binding</keyword>
<keyword id="KW-0561">Oxygen transport</keyword>
<keyword id="KW-1185">Reference proteome</keyword>
<keyword id="KW-0813">Transport</keyword>
<dbReference type="EMBL" id="EF471980">
    <property type="protein sequence ID" value="ABO31387.1"/>
    <property type="molecule type" value="mRNA"/>
</dbReference>
<dbReference type="EMBL" id="FO080699">
    <property type="protein sequence ID" value="CCD65927.1"/>
    <property type="molecule type" value="Genomic_DNA"/>
</dbReference>
<dbReference type="PIR" id="T15685">
    <property type="entry name" value="T15685"/>
</dbReference>
<dbReference type="RefSeq" id="NP_495572.3">
    <property type="nucleotide sequence ID" value="NM_063171.7"/>
</dbReference>
<dbReference type="SMR" id="Q09240"/>
<dbReference type="FunCoup" id="Q09240">
    <property type="interactions" value="220"/>
</dbReference>
<dbReference type="STRING" id="6239.C28F5.2d.1"/>
<dbReference type="PaxDb" id="6239-C28F5.2"/>
<dbReference type="EnsemblMetazoa" id="C28F5.2a.1">
    <property type="protein sequence ID" value="C28F5.2a.1"/>
    <property type="gene ID" value="WBGene00016184"/>
</dbReference>
<dbReference type="EnsemblMetazoa" id="C28F5.2a.2">
    <property type="protein sequence ID" value="C28F5.2a.2"/>
    <property type="gene ID" value="WBGene00016184"/>
</dbReference>
<dbReference type="GeneID" id="182985"/>
<dbReference type="KEGG" id="cel:CELE_C28F5.2"/>
<dbReference type="AGR" id="WB:WBGene00016184"/>
<dbReference type="CTD" id="182985"/>
<dbReference type="WormBase" id="C28F5.2a">
    <property type="protein sequence ID" value="CE40743"/>
    <property type="gene ID" value="WBGene00016184"/>
    <property type="gene designation" value="glb-9"/>
</dbReference>
<dbReference type="eggNOG" id="KOG3378">
    <property type="taxonomic scope" value="Eukaryota"/>
</dbReference>
<dbReference type="HOGENOM" id="CLU_1246321_0_0_1"/>
<dbReference type="InParanoid" id="Q09240"/>
<dbReference type="OMA" id="FSSDIWE"/>
<dbReference type="OrthoDB" id="5848155at2759"/>
<dbReference type="PhylomeDB" id="Q09240"/>
<dbReference type="PRO" id="PR:Q09240"/>
<dbReference type="Proteomes" id="UP000001940">
    <property type="component" value="Chromosome II"/>
</dbReference>
<dbReference type="Bgee" id="WBGene00016184">
    <property type="expression patterns" value="Expressed in larva and 3 other cell types or tissues"/>
</dbReference>
<dbReference type="ExpressionAtlas" id="Q09240">
    <property type="expression patterns" value="baseline and differential"/>
</dbReference>
<dbReference type="GO" id="GO:0020037">
    <property type="term" value="F:heme binding"/>
    <property type="evidence" value="ECO:0007669"/>
    <property type="project" value="InterPro"/>
</dbReference>
<dbReference type="GO" id="GO:0046872">
    <property type="term" value="F:metal ion binding"/>
    <property type="evidence" value="ECO:0007669"/>
    <property type="project" value="UniProtKB-KW"/>
</dbReference>
<dbReference type="GO" id="GO:0019825">
    <property type="term" value="F:oxygen binding"/>
    <property type="evidence" value="ECO:0000318"/>
    <property type="project" value="GO_Central"/>
</dbReference>
<dbReference type="GO" id="GO:0005344">
    <property type="term" value="F:oxygen carrier activity"/>
    <property type="evidence" value="ECO:0000318"/>
    <property type="project" value="GO_Central"/>
</dbReference>
<dbReference type="GO" id="GO:0015671">
    <property type="term" value="P:oxygen transport"/>
    <property type="evidence" value="ECO:0000318"/>
    <property type="project" value="GO_Central"/>
</dbReference>
<dbReference type="GO" id="GO:0001666">
    <property type="term" value="P:response to hypoxia"/>
    <property type="evidence" value="ECO:0000318"/>
    <property type="project" value="GO_Central"/>
</dbReference>
<dbReference type="CDD" id="cd01040">
    <property type="entry name" value="Mb-like"/>
    <property type="match status" value="1"/>
</dbReference>
<dbReference type="Gene3D" id="1.10.490.10">
    <property type="entry name" value="Globins"/>
    <property type="match status" value="1"/>
</dbReference>
<dbReference type="InterPro" id="IPR000971">
    <property type="entry name" value="Globin"/>
</dbReference>
<dbReference type="InterPro" id="IPR050532">
    <property type="entry name" value="Globin-like_OT"/>
</dbReference>
<dbReference type="InterPro" id="IPR009050">
    <property type="entry name" value="Globin-like_sf"/>
</dbReference>
<dbReference type="InterPro" id="IPR012292">
    <property type="entry name" value="Globin/Proto"/>
</dbReference>
<dbReference type="InterPro" id="IPR044399">
    <property type="entry name" value="Mb-like_M"/>
</dbReference>
<dbReference type="PANTHER" id="PTHR46458">
    <property type="entry name" value="BLR2807 PROTEIN"/>
    <property type="match status" value="1"/>
</dbReference>
<dbReference type="PANTHER" id="PTHR46458:SF11">
    <property type="entry name" value="GLOBIN-LIKE PROTEIN 9"/>
    <property type="match status" value="1"/>
</dbReference>
<dbReference type="Pfam" id="PF00042">
    <property type="entry name" value="Globin"/>
    <property type="match status" value="1"/>
</dbReference>
<dbReference type="SUPFAM" id="SSF46458">
    <property type="entry name" value="Globin-like"/>
    <property type="match status" value="1"/>
</dbReference>
<dbReference type="PROSITE" id="PS01033">
    <property type="entry name" value="GLOBIN"/>
    <property type="match status" value="1"/>
</dbReference>
<organism>
    <name type="scientific">Caenorhabditis elegans</name>
    <dbReference type="NCBI Taxonomy" id="6239"/>
    <lineage>
        <taxon>Eukaryota</taxon>
        <taxon>Metazoa</taxon>
        <taxon>Ecdysozoa</taxon>
        <taxon>Nematoda</taxon>
        <taxon>Chromadorea</taxon>
        <taxon>Rhabditida</taxon>
        <taxon>Rhabditina</taxon>
        <taxon>Rhabditomorpha</taxon>
        <taxon>Rhabditoidea</taxon>
        <taxon>Rhabditidae</taxon>
        <taxon>Peloderinae</taxon>
        <taxon>Caenorhabditis</taxon>
    </lineage>
</organism>
<feature type="chain" id="PRO_0000065196" description="Globin-like protein 9">
    <location>
        <begin position="1"/>
        <end position="249"/>
    </location>
</feature>
<feature type="domain" description="Globin" evidence="2">
    <location>
        <begin position="52"/>
        <end position="205"/>
    </location>
</feature>
<feature type="region of interest" description="Disordered" evidence="3">
    <location>
        <begin position="20"/>
        <end position="43"/>
    </location>
</feature>
<feature type="binding site" description="distal binding residue" evidence="1">
    <location>
        <position position="116"/>
    </location>
    <ligand>
        <name>heme</name>
        <dbReference type="ChEBI" id="CHEBI:30413"/>
    </ligand>
    <ligandPart>
        <name>Fe</name>
        <dbReference type="ChEBI" id="CHEBI:18248"/>
    </ligandPart>
</feature>
<feature type="binding site" description="proximal binding residue" evidence="1">
    <location>
        <position position="148"/>
    </location>
    <ligand>
        <name>heme</name>
        <dbReference type="ChEBI" id="CHEBI:30413"/>
    </ligand>
    <ligandPart>
        <name>Fe</name>
        <dbReference type="ChEBI" id="CHEBI:18248"/>
    </ligandPart>
</feature>